<keyword id="KW-0007">Acetylation</keyword>
<keyword id="KW-1017">Isopeptide bond</keyword>
<keyword id="KW-0479">Metal-binding</keyword>
<keyword id="KW-0539">Nucleus</keyword>
<keyword id="KW-0597">Phosphoprotein</keyword>
<keyword id="KW-1185">Reference proteome</keyword>
<keyword id="KW-0832">Ubl conjugation</keyword>
<keyword id="KW-0879">Wnt signaling pathway</keyword>
<keyword id="KW-0862">Zinc</keyword>
<comment type="function">
    <text evidence="2 3">Regulatory subunit of casein kinase II/CK2. As part of the kinase complex regulates the basal catalytic activity of the alpha subunit a constitutively active serine/threonine-protein kinase that phosphorylates a large number of substrates containing acidic residues C-terminal to the phosphorylated serine or threonine (By similarity). Participates in Wnt signaling (By similarity).</text>
</comment>
<comment type="subunit">
    <text evidence="1 2">Casein kinase II/CK2 is a tetramer composed of an alpha subunit, an alpha' subunit and two beta subunits. The beta subunit dimerization is mediated by zinc ions. Interacts with DYNLT2 (By similarity). Interacts with CD163. Also a component of a CK2-SPT16-SSRP1 complex composed of SSRP1, SUPT16H, CSNK2A1, CSNK2A2 and CSNK2B, the complex associating following UV irradiation. Interacts with MUSK; mediates phosphorylation of MUSK by CK2. Interacts with FGF1; this interaction is increased in the presence of FIBP, suggesting a possible cooperative interaction between CSNKB and FIBP in binding to FGF1 (By similarity). Interacts (via KSSR motif) with ARK2N. Interacts with JUN and ARK2N; mediates the interaction between ARK2N and JUN (By similarity).</text>
</comment>
<comment type="subcellular location">
    <subcellularLocation>
        <location evidence="2">Nucleus</location>
    </subcellularLocation>
</comment>
<comment type="domain">
    <text evidence="2">The KSSR motif is part of a protein interaction pocket that mediates interaction with cellular and viral proteins.</text>
</comment>
<comment type="PTM">
    <text evidence="1">Phosphorylated by alpha subunit. Also a component of a CK2-SPT16-SSRP1 complex composed of SSRP1, SUPT16H, CSNK2A1, CSNK2A2 and CSNK2B, the complex associating following UV irradiation (By similarity).</text>
</comment>
<comment type="similarity">
    <text evidence="4">Belongs to the casein kinase 2 subunit beta family.</text>
</comment>
<gene>
    <name type="primary">CSNK2B</name>
    <name type="synonym">CK2N</name>
</gene>
<proteinExistence type="evidence at transcript level"/>
<organism>
    <name type="scientific">Oryctolagus cuniculus</name>
    <name type="common">Rabbit</name>
    <dbReference type="NCBI Taxonomy" id="9986"/>
    <lineage>
        <taxon>Eukaryota</taxon>
        <taxon>Metazoa</taxon>
        <taxon>Chordata</taxon>
        <taxon>Craniata</taxon>
        <taxon>Vertebrata</taxon>
        <taxon>Euteleostomi</taxon>
        <taxon>Mammalia</taxon>
        <taxon>Eutheria</taxon>
        <taxon>Euarchontoglires</taxon>
        <taxon>Glires</taxon>
        <taxon>Lagomorpha</taxon>
        <taxon>Leporidae</taxon>
        <taxon>Oryctolagus</taxon>
    </lineage>
</organism>
<feature type="initiator methionine" description="Removed" evidence="2">
    <location>
        <position position="1"/>
    </location>
</feature>
<feature type="chain" id="PRO_0000068239" description="Casein kinase II subunit beta">
    <location>
        <begin position="2"/>
        <end position="215"/>
    </location>
</feature>
<feature type="region of interest" description="Interaction with alpha subunit" evidence="1">
    <location>
        <begin position="188"/>
        <end position="193"/>
    </location>
</feature>
<feature type="short sequence motif" description="KSSR motif" evidence="2">
    <location>
        <begin position="147"/>
        <end position="150"/>
    </location>
</feature>
<feature type="binding site" evidence="1">
    <location>
        <position position="109"/>
    </location>
    <ligand>
        <name>Zn(2+)</name>
        <dbReference type="ChEBI" id="CHEBI:29105"/>
    </ligand>
</feature>
<feature type="binding site" evidence="1">
    <location>
        <position position="114"/>
    </location>
    <ligand>
        <name>Zn(2+)</name>
        <dbReference type="ChEBI" id="CHEBI:29105"/>
    </ligand>
</feature>
<feature type="binding site" evidence="1">
    <location>
        <position position="137"/>
    </location>
    <ligand>
        <name>Zn(2+)</name>
        <dbReference type="ChEBI" id="CHEBI:29105"/>
    </ligand>
</feature>
<feature type="binding site" evidence="1">
    <location>
        <position position="140"/>
    </location>
    <ligand>
        <name>Zn(2+)</name>
        <dbReference type="ChEBI" id="CHEBI:29105"/>
    </ligand>
</feature>
<feature type="modified residue" description="N-acetylserine" evidence="2">
    <location>
        <position position="2"/>
    </location>
</feature>
<feature type="modified residue" description="Phosphoserine; by autocatalysis" evidence="2 4">
    <location>
        <position position="2"/>
    </location>
</feature>
<feature type="modified residue" description="Phosphoserine; by autocatalysis" evidence="2">
    <location>
        <position position="3"/>
    </location>
</feature>
<feature type="modified residue" description="Phosphoserine" evidence="2">
    <location>
        <position position="8"/>
    </location>
</feature>
<feature type="modified residue" description="Phosphothreonine" evidence="2">
    <location>
        <position position="37"/>
    </location>
</feature>
<feature type="modified residue" description="Phosphoserine" evidence="2">
    <location>
        <position position="69"/>
    </location>
</feature>
<feature type="modified residue" description="Phosphoserine" evidence="2">
    <location>
        <position position="209"/>
    </location>
</feature>
<feature type="modified residue" description="N6-acetyllysine; alternate" evidence="2">
    <location>
        <position position="212"/>
    </location>
</feature>
<feature type="cross-link" description="Glycyl lysine isopeptide (Lys-Gly) (interchain with G-Cter in SUMO2); alternate" evidence="2">
    <location>
        <position position="212"/>
    </location>
</feature>
<protein>
    <recommendedName>
        <fullName>Casein kinase II subunit beta</fullName>
        <shortName>CK II beta</shortName>
    </recommendedName>
    <alternativeName>
        <fullName>Phosvitin</fullName>
    </alternativeName>
</protein>
<accession>P67873</accession>
<accession>P07312</accession>
<accession>P13862</accession>
<evidence type="ECO:0000250" key="1"/>
<evidence type="ECO:0000250" key="2">
    <source>
        <dbReference type="UniProtKB" id="P67870"/>
    </source>
</evidence>
<evidence type="ECO:0000250" key="3">
    <source>
        <dbReference type="UniProtKB" id="P67871"/>
    </source>
</evidence>
<evidence type="ECO:0000305" key="4"/>
<reference key="1">
    <citation type="journal article" date="1993" name="Gene">
        <title>PCR cloning and sequence of two cDNAs encoding the alpha and beta subunits of rabbit casein kinase-II.</title>
        <authorList>
            <person name="Gupta S.K."/>
            <person name="Singh J.P."/>
        </authorList>
    </citation>
    <scope>NUCLEOTIDE SEQUENCE [MRNA]</scope>
</reference>
<reference key="2">
    <citation type="submission" date="1996-03" db="EMBL/GenBank/DDBJ databases">
        <title>PCR cloning and sequence of two cDNAs encoding the alpha and beta subunit of rabbit casein kinase-II.</title>
        <authorList>
            <person name="Gupta S.K."/>
            <person name="Rothfuss K.J."/>
            <person name="Singh J.P."/>
        </authorList>
    </citation>
    <scope>NUCLEOTIDE SEQUENCE [MRNA]</scope>
    <source>
        <strain>New Zealand white</strain>
    </source>
</reference>
<sequence length="215" mass="24942">MSSSEEVSWISWFCGLRGNEFFCEVDEDYIQDKFNLTGLNEQVPHYRQALDMILDLEPDEELEDNPNQSDLIEQAAEMLYGLIHARYILTNRGIAQMLEKYQQGDFGYCPRVYCENQPMLPIGLSDIPGEAMVKLYCPKCMDVYTPKSSRHHHTDGAYFGTGFPHMLFMVHPEYRPKRPANQFVPRLYGFKIHPMAYQLQLQAASNFKSPVKTIR</sequence>
<dbReference type="EMBL" id="S56242">
    <property type="protein sequence ID" value="AAB25555.1"/>
    <property type="molecule type" value="mRNA"/>
</dbReference>
<dbReference type="EMBL" id="M98450">
    <property type="protein sequence ID" value="AAA91892.1"/>
    <property type="molecule type" value="mRNA"/>
</dbReference>
<dbReference type="PIR" id="JN0556">
    <property type="entry name" value="JN0556"/>
</dbReference>
<dbReference type="RefSeq" id="NP_001153755.1">
    <property type="nucleotide sequence ID" value="NM_001160283.1"/>
</dbReference>
<dbReference type="SMR" id="P67873"/>
<dbReference type="BioGRID" id="1172791">
    <property type="interactions" value="1"/>
</dbReference>
<dbReference type="FunCoup" id="P67873">
    <property type="interactions" value="2253"/>
</dbReference>
<dbReference type="STRING" id="9986.ENSOCUP00000033946"/>
<dbReference type="PaxDb" id="9986-ENSOCUP00000017566"/>
<dbReference type="Ensembl" id="ENSOCUT00000023439.3">
    <property type="protein sequence ID" value="ENSOCUP00000017566.2"/>
    <property type="gene ID" value="ENSOCUG00000023483.3"/>
</dbReference>
<dbReference type="GeneID" id="100301531"/>
<dbReference type="KEGG" id="ocu:100301531"/>
<dbReference type="CTD" id="1460"/>
<dbReference type="eggNOG" id="KOG3092">
    <property type="taxonomic scope" value="Eukaryota"/>
</dbReference>
<dbReference type="GeneTree" id="ENSGT00390000003781"/>
<dbReference type="HOGENOM" id="CLU_034027_3_3_1"/>
<dbReference type="InParanoid" id="P67873"/>
<dbReference type="OMA" id="DADFGRC"/>
<dbReference type="OrthoDB" id="3971593at2759"/>
<dbReference type="Proteomes" id="UP000001811">
    <property type="component" value="Chromosome 12"/>
</dbReference>
<dbReference type="Bgee" id="ENSOCUG00000023483">
    <property type="expression patterns" value="Expressed in testis and 15 other cell types or tissues"/>
</dbReference>
<dbReference type="GO" id="GO:0005737">
    <property type="term" value="C:cytoplasm"/>
    <property type="evidence" value="ECO:0007669"/>
    <property type="project" value="TreeGrafter"/>
</dbReference>
<dbReference type="GO" id="GO:0005634">
    <property type="term" value="C:nucleus"/>
    <property type="evidence" value="ECO:0007669"/>
    <property type="project" value="UniProtKB-SubCell"/>
</dbReference>
<dbReference type="GO" id="GO:0005956">
    <property type="term" value="C:protein kinase CK2 complex"/>
    <property type="evidence" value="ECO:0007669"/>
    <property type="project" value="InterPro"/>
</dbReference>
<dbReference type="GO" id="GO:0046872">
    <property type="term" value="F:metal ion binding"/>
    <property type="evidence" value="ECO:0007669"/>
    <property type="project" value="UniProtKB-KW"/>
</dbReference>
<dbReference type="GO" id="GO:0019887">
    <property type="term" value="F:protein kinase regulator activity"/>
    <property type="evidence" value="ECO:0007669"/>
    <property type="project" value="InterPro"/>
</dbReference>
<dbReference type="GO" id="GO:0016055">
    <property type="term" value="P:Wnt signaling pathway"/>
    <property type="evidence" value="ECO:0007669"/>
    <property type="project" value="UniProtKB-KW"/>
</dbReference>
<dbReference type="FunFam" id="1.10.1820.10:FF:000001">
    <property type="entry name" value="Casein kinase II subunit beta"/>
    <property type="match status" value="1"/>
</dbReference>
<dbReference type="FunFam" id="2.20.25.20:FF:000002">
    <property type="entry name" value="Casein kinase II subunit beta"/>
    <property type="match status" value="1"/>
</dbReference>
<dbReference type="Gene3D" id="2.20.25.20">
    <property type="match status" value="1"/>
</dbReference>
<dbReference type="Gene3D" id="1.10.1820.10">
    <property type="entry name" value="protein kinase ck2 holoenzyme, chain C, domain 1"/>
    <property type="match status" value="1"/>
</dbReference>
<dbReference type="InterPro" id="IPR016149">
    <property type="entry name" value="Casein_kin_II_reg-sub_N"/>
</dbReference>
<dbReference type="InterPro" id="IPR035991">
    <property type="entry name" value="Casein_kinase_II_beta-like"/>
</dbReference>
<dbReference type="InterPro" id="IPR000704">
    <property type="entry name" value="Casein_kinase_II_reg-sub"/>
</dbReference>
<dbReference type="PANTHER" id="PTHR11740">
    <property type="entry name" value="CASEIN KINASE II SUBUNIT BETA"/>
    <property type="match status" value="1"/>
</dbReference>
<dbReference type="PANTHER" id="PTHR11740:SF0">
    <property type="entry name" value="CASEIN KINASE II SUBUNIT BETA"/>
    <property type="match status" value="1"/>
</dbReference>
<dbReference type="Pfam" id="PF01214">
    <property type="entry name" value="CK_II_beta"/>
    <property type="match status" value="1"/>
</dbReference>
<dbReference type="PRINTS" id="PR00472">
    <property type="entry name" value="CASNKINASEII"/>
</dbReference>
<dbReference type="SMART" id="SM01085">
    <property type="entry name" value="CK_II_beta"/>
    <property type="match status" value="1"/>
</dbReference>
<dbReference type="SUPFAM" id="SSF57798">
    <property type="entry name" value="Casein kinase II beta subunit"/>
    <property type="match status" value="1"/>
</dbReference>
<dbReference type="PROSITE" id="PS01101">
    <property type="entry name" value="CK2_BETA"/>
    <property type="match status" value="1"/>
</dbReference>
<name>CSK2B_RABIT</name>